<evidence type="ECO:0000255" key="1">
    <source>
        <dbReference type="HAMAP-Rule" id="MF_01547"/>
    </source>
</evidence>
<protein>
    <recommendedName>
        <fullName evidence="1">Ribosomal RNA large subunit methyltransferase E</fullName>
        <ecNumber evidence="1">2.1.1.166</ecNumber>
    </recommendedName>
    <alternativeName>
        <fullName evidence="1">23S rRNA Um2552 methyltransferase</fullName>
    </alternativeName>
    <alternativeName>
        <fullName evidence="1">rRNA (uridine-2'-O-)-methyltransferase</fullName>
    </alternativeName>
</protein>
<feature type="chain" id="PRO_1000215458" description="Ribosomal RNA large subunit methyltransferase E">
    <location>
        <begin position="1"/>
        <end position="227"/>
    </location>
</feature>
<feature type="active site" description="Proton acceptor" evidence="1">
    <location>
        <position position="183"/>
    </location>
</feature>
<feature type="binding site" evidence="1">
    <location>
        <position position="78"/>
    </location>
    <ligand>
        <name>S-adenosyl-L-methionine</name>
        <dbReference type="ChEBI" id="CHEBI:59789"/>
    </ligand>
</feature>
<feature type="binding site" evidence="1">
    <location>
        <position position="80"/>
    </location>
    <ligand>
        <name>S-adenosyl-L-methionine</name>
        <dbReference type="ChEBI" id="CHEBI:59789"/>
    </ligand>
</feature>
<feature type="binding site" evidence="1">
    <location>
        <position position="103"/>
    </location>
    <ligand>
        <name>S-adenosyl-L-methionine</name>
        <dbReference type="ChEBI" id="CHEBI:59789"/>
    </ligand>
</feature>
<feature type="binding site" evidence="1">
    <location>
        <position position="119"/>
    </location>
    <ligand>
        <name>S-adenosyl-L-methionine</name>
        <dbReference type="ChEBI" id="CHEBI:59789"/>
    </ligand>
</feature>
<feature type="binding site" evidence="1">
    <location>
        <position position="143"/>
    </location>
    <ligand>
        <name>S-adenosyl-L-methionine</name>
        <dbReference type="ChEBI" id="CHEBI:59789"/>
    </ligand>
</feature>
<proteinExistence type="inferred from homology"/>
<accession>C4K0Q4</accession>
<sequence length="227" mass="25706">MTNNLSGYRNKFVRVKTSKKRTVSSSNWLRRQLNDPYVAKARIDGFRSRAAYKLLEIHEKFKLFIPNMKIVDLGAAPGGWSQVASKLIKASDNNLNNKIISIDVLEIEHVAGVEFVQKDFFEADTEELIIQALDGRADIVMSDMASNTIGHKATDHIRTLLLCEQAFEFALKVLKPSGHFIAKIFRGGAENELLHKVKREFKTVKHFKPSSSRSESTEIYLVALNKK</sequence>
<comment type="function">
    <text evidence="1">Specifically methylates the uridine in position 2552 of 23S rRNA at the 2'-O position of the ribose in the fully assembled 50S ribosomal subunit.</text>
</comment>
<comment type="catalytic activity">
    <reaction evidence="1">
        <text>uridine(2552) in 23S rRNA + S-adenosyl-L-methionine = 2'-O-methyluridine(2552) in 23S rRNA + S-adenosyl-L-homocysteine + H(+)</text>
        <dbReference type="Rhea" id="RHEA:42720"/>
        <dbReference type="Rhea" id="RHEA-COMP:10202"/>
        <dbReference type="Rhea" id="RHEA-COMP:10203"/>
        <dbReference type="ChEBI" id="CHEBI:15378"/>
        <dbReference type="ChEBI" id="CHEBI:57856"/>
        <dbReference type="ChEBI" id="CHEBI:59789"/>
        <dbReference type="ChEBI" id="CHEBI:65315"/>
        <dbReference type="ChEBI" id="CHEBI:74478"/>
        <dbReference type="EC" id="2.1.1.166"/>
    </reaction>
</comment>
<comment type="subcellular location">
    <subcellularLocation>
        <location evidence="1">Cytoplasm</location>
    </subcellularLocation>
</comment>
<comment type="similarity">
    <text evidence="1">Belongs to the class I-like SAM-binding methyltransferase superfamily. RNA methyltransferase RlmE family.</text>
</comment>
<gene>
    <name evidence="1" type="primary">rlmE</name>
    <name evidence="1" type="synonym">ftsJ</name>
    <name evidence="1" type="synonym">rrmJ</name>
    <name type="ordered locus">RPR_01185</name>
</gene>
<keyword id="KW-0963">Cytoplasm</keyword>
<keyword id="KW-0489">Methyltransferase</keyword>
<keyword id="KW-0698">rRNA processing</keyword>
<keyword id="KW-0949">S-adenosyl-L-methionine</keyword>
<keyword id="KW-0808">Transferase</keyword>
<name>RLME_RICPU</name>
<organism>
    <name type="scientific">Rickettsia peacockii (strain Rustic)</name>
    <dbReference type="NCBI Taxonomy" id="562019"/>
    <lineage>
        <taxon>Bacteria</taxon>
        <taxon>Pseudomonadati</taxon>
        <taxon>Pseudomonadota</taxon>
        <taxon>Alphaproteobacteria</taxon>
        <taxon>Rickettsiales</taxon>
        <taxon>Rickettsiaceae</taxon>
        <taxon>Rickettsieae</taxon>
        <taxon>Rickettsia</taxon>
        <taxon>spotted fever group</taxon>
    </lineage>
</organism>
<dbReference type="EC" id="2.1.1.166" evidence="1"/>
<dbReference type="EMBL" id="CP001227">
    <property type="protein sequence ID" value="ACR47155.1"/>
    <property type="molecule type" value="Genomic_DNA"/>
</dbReference>
<dbReference type="RefSeq" id="WP_012736448.1">
    <property type="nucleotide sequence ID" value="NC_012730.1"/>
</dbReference>
<dbReference type="SMR" id="C4K0Q4"/>
<dbReference type="KEGG" id="rpk:RPR_01185"/>
<dbReference type="HOGENOM" id="CLU_009422_4_0_5"/>
<dbReference type="Proteomes" id="UP000005015">
    <property type="component" value="Chromosome"/>
</dbReference>
<dbReference type="GO" id="GO:0005737">
    <property type="term" value="C:cytoplasm"/>
    <property type="evidence" value="ECO:0007669"/>
    <property type="project" value="UniProtKB-SubCell"/>
</dbReference>
<dbReference type="GO" id="GO:0008650">
    <property type="term" value="F:rRNA (uridine-2'-O-)-methyltransferase activity"/>
    <property type="evidence" value="ECO:0007669"/>
    <property type="project" value="UniProtKB-UniRule"/>
</dbReference>
<dbReference type="FunFam" id="3.40.50.150:FF:000354">
    <property type="entry name" value="Ribosomal RNA large subunit methyltransferase E"/>
    <property type="match status" value="1"/>
</dbReference>
<dbReference type="Gene3D" id="3.40.50.150">
    <property type="entry name" value="Vaccinia Virus protein VP39"/>
    <property type="match status" value="1"/>
</dbReference>
<dbReference type="HAMAP" id="MF_01547">
    <property type="entry name" value="RNA_methyltr_E"/>
    <property type="match status" value="1"/>
</dbReference>
<dbReference type="InterPro" id="IPR050082">
    <property type="entry name" value="RNA_methyltr_RlmE"/>
</dbReference>
<dbReference type="InterPro" id="IPR002877">
    <property type="entry name" value="RNA_MeTrfase_FtsJ_dom"/>
</dbReference>
<dbReference type="InterPro" id="IPR015507">
    <property type="entry name" value="rRNA-MeTfrase_E"/>
</dbReference>
<dbReference type="InterPro" id="IPR029063">
    <property type="entry name" value="SAM-dependent_MTases_sf"/>
</dbReference>
<dbReference type="PANTHER" id="PTHR10920">
    <property type="entry name" value="RIBOSOMAL RNA METHYLTRANSFERASE"/>
    <property type="match status" value="1"/>
</dbReference>
<dbReference type="PANTHER" id="PTHR10920:SF18">
    <property type="entry name" value="RRNA METHYLTRANSFERASE 2, MITOCHONDRIAL"/>
    <property type="match status" value="1"/>
</dbReference>
<dbReference type="Pfam" id="PF01728">
    <property type="entry name" value="FtsJ"/>
    <property type="match status" value="1"/>
</dbReference>
<dbReference type="PIRSF" id="PIRSF005461">
    <property type="entry name" value="23S_rRNA_mtase"/>
    <property type="match status" value="1"/>
</dbReference>
<dbReference type="SUPFAM" id="SSF53335">
    <property type="entry name" value="S-adenosyl-L-methionine-dependent methyltransferases"/>
    <property type="match status" value="1"/>
</dbReference>
<reference key="1">
    <citation type="journal article" date="2009" name="PLoS ONE">
        <title>Genome sequence of the endosymbiont Rickettsia peacockii and comparison with virulent Rickettsia rickettsii: identification of virulence factors.</title>
        <authorList>
            <person name="Felsheim R.F."/>
            <person name="Kurtti T.J."/>
            <person name="Munderloh U.G."/>
        </authorList>
    </citation>
    <scope>NUCLEOTIDE SEQUENCE [LARGE SCALE GENOMIC DNA]</scope>
    <source>
        <strain>Rustic</strain>
    </source>
</reference>